<evidence type="ECO:0000255" key="1">
    <source>
        <dbReference type="HAMAP-Rule" id="MF_00281"/>
    </source>
</evidence>
<evidence type="ECO:0000305" key="2"/>
<accession>Q5XCX4</accession>
<dbReference type="EC" id="6.1.1.20" evidence="1"/>
<dbReference type="EMBL" id="CP000003">
    <property type="protein sequence ID" value="AAT86739.1"/>
    <property type="status" value="ALT_INIT"/>
    <property type="molecule type" value="Genomic_DNA"/>
</dbReference>
<dbReference type="RefSeq" id="WP_003057440.1">
    <property type="nucleotide sequence ID" value="NC_006086.1"/>
</dbReference>
<dbReference type="SMR" id="Q5XCX4"/>
<dbReference type="KEGG" id="spa:M6_Spy0604"/>
<dbReference type="HOGENOM" id="CLU_025086_0_1_9"/>
<dbReference type="Proteomes" id="UP000001167">
    <property type="component" value="Chromosome"/>
</dbReference>
<dbReference type="GO" id="GO:0005737">
    <property type="term" value="C:cytoplasm"/>
    <property type="evidence" value="ECO:0007669"/>
    <property type="project" value="UniProtKB-SubCell"/>
</dbReference>
<dbReference type="GO" id="GO:0005524">
    <property type="term" value="F:ATP binding"/>
    <property type="evidence" value="ECO:0007669"/>
    <property type="project" value="UniProtKB-UniRule"/>
</dbReference>
<dbReference type="GO" id="GO:0140096">
    <property type="term" value="F:catalytic activity, acting on a protein"/>
    <property type="evidence" value="ECO:0007669"/>
    <property type="project" value="UniProtKB-ARBA"/>
</dbReference>
<dbReference type="GO" id="GO:0000287">
    <property type="term" value="F:magnesium ion binding"/>
    <property type="evidence" value="ECO:0007669"/>
    <property type="project" value="UniProtKB-UniRule"/>
</dbReference>
<dbReference type="GO" id="GO:0004826">
    <property type="term" value="F:phenylalanine-tRNA ligase activity"/>
    <property type="evidence" value="ECO:0007669"/>
    <property type="project" value="UniProtKB-UniRule"/>
</dbReference>
<dbReference type="GO" id="GO:0016740">
    <property type="term" value="F:transferase activity"/>
    <property type="evidence" value="ECO:0007669"/>
    <property type="project" value="UniProtKB-ARBA"/>
</dbReference>
<dbReference type="GO" id="GO:0000049">
    <property type="term" value="F:tRNA binding"/>
    <property type="evidence" value="ECO:0007669"/>
    <property type="project" value="InterPro"/>
</dbReference>
<dbReference type="GO" id="GO:0006432">
    <property type="term" value="P:phenylalanyl-tRNA aminoacylation"/>
    <property type="evidence" value="ECO:0007669"/>
    <property type="project" value="UniProtKB-UniRule"/>
</dbReference>
<dbReference type="CDD" id="cd00496">
    <property type="entry name" value="PheRS_alpha_core"/>
    <property type="match status" value="1"/>
</dbReference>
<dbReference type="FunFam" id="3.30.930.10:FF:000003">
    <property type="entry name" value="Phenylalanine--tRNA ligase alpha subunit"/>
    <property type="match status" value="1"/>
</dbReference>
<dbReference type="Gene3D" id="3.30.930.10">
    <property type="entry name" value="Bira Bifunctional Protein, Domain 2"/>
    <property type="match status" value="1"/>
</dbReference>
<dbReference type="HAMAP" id="MF_00281">
    <property type="entry name" value="Phe_tRNA_synth_alpha1"/>
    <property type="match status" value="1"/>
</dbReference>
<dbReference type="InterPro" id="IPR006195">
    <property type="entry name" value="aa-tRNA-synth_II"/>
</dbReference>
<dbReference type="InterPro" id="IPR045864">
    <property type="entry name" value="aa-tRNA-synth_II/BPL/LPL"/>
</dbReference>
<dbReference type="InterPro" id="IPR004529">
    <property type="entry name" value="Phe-tRNA-synth_IIc_asu"/>
</dbReference>
<dbReference type="InterPro" id="IPR004188">
    <property type="entry name" value="Phe-tRNA_ligase_II_N"/>
</dbReference>
<dbReference type="InterPro" id="IPR022911">
    <property type="entry name" value="Phe_tRNA_ligase_alpha1_bac"/>
</dbReference>
<dbReference type="InterPro" id="IPR002319">
    <property type="entry name" value="Phenylalanyl-tRNA_Synthase"/>
</dbReference>
<dbReference type="InterPro" id="IPR010978">
    <property type="entry name" value="tRNA-bd_arm"/>
</dbReference>
<dbReference type="NCBIfam" id="TIGR00468">
    <property type="entry name" value="pheS"/>
    <property type="match status" value="1"/>
</dbReference>
<dbReference type="PANTHER" id="PTHR11538:SF41">
    <property type="entry name" value="PHENYLALANINE--TRNA LIGASE, MITOCHONDRIAL"/>
    <property type="match status" value="1"/>
</dbReference>
<dbReference type="PANTHER" id="PTHR11538">
    <property type="entry name" value="PHENYLALANYL-TRNA SYNTHETASE"/>
    <property type="match status" value="1"/>
</dbReference>
<dbReference type="Pfam" id="PF02912">
    <property type="entry name" value="Phe_tRNA-synt_N"/>
    <property type="match status" value="1"/>
</dbReference>
<dbReference type="Pfam" id="PF01409">
    <property type="entry name" value="tRNA-synt_2d"/>
    <property type="match status" value="1"/>
</dbReference>
<dbReference type="SUPFAM" id="SSF55681">
    <property type="entry name" value="Class II aaRS and biotin synthetases"/>
    <property type="match status" value="1"/>
</dbReference>
<dbReference type="SUPFAM" id="SSF46589">
    <property type="entry name" value="tRNA-binding arm"/>
    <property type="match status" value="1"/>
</dbReference>
<dbReference type="PROSITE" id="PS50862">
    <property type="entry name" value="AA_TRNA_LIGASE_II"/>
    <property type="match status" value="1"/>
</dbReference>
<name>SYFA_STRP6</name>
<sequence>MDLQAQLEELKTKTLETLQSLTGNHTKELQDLRVAVLGKKGSLTELLKGLKDLSNDLRPVVGKQVNEVRDLLTKAFEEQAKIVEAAKIQAQLDAESIDVTLPGRQMTLGHRHVLTQTSEEIEDIFLGMGFQIVDGFEVEKDYYNFERMNLPKDHPARDMQDTFYITEEILLRTHTSPVQARTLDQHDFSKGPLKMVSPGRVFRRDTDDATHSHQFHQIEGLVVGKNISMGDLKGTLEMIIKKMFGEERSIRLRPSYFPFTEPSVEVDVSCFKCGGKGCNVCKKTGWIEILGAGMVHPSVLEMSGVDAKEYSGFAFGLGQERIAMLRYGINDIRGFYQGDQRFSEQFN</sequence>
<feature type="chain" id="PRO_0000126777" description="Phenylalanine--tRNA ligase alpha subunit">
    <location>
        <begin position="1"/>
        <end position="347"/>
    </location>
</feature>
<feature type="binding site" evidence="1">
    <location>
        <position position="261"/>
    </location>
    <ligand>
        <name>Mg(2+)</name>
        <dbReference type="ChEBI" id="CHEBI:18420"/>
        <note>shared with beta subunit</note>
    </ligand>
</feature>
<keyword id="KW-0030">Aminoacyl-tRNA synthetase</keyword>
<keyword id="KW-0067">ATP-binding</keyword>
<keyword id="KW-0963">Cytoplasm</keyword>
<keyword id="KW-0436">Ligase</keyword>
<keyword id="KW-0460">Magnesium</keyword>
<keyword id="KW-0479">Metal-binding</keyword>
<keyword id="KW-0547">Nucleotide-binding</keyword>
<keyword id="KW-0648">Protein biosynthesis</keyword>
<proteinExistence type="inferred from homology"/>
<reference key="1">
    <citation type="journal article" date="2004" name="J. Infect. Dis.">
        <title>Progress toward characterization of the group A Streptococcus metagenome: complete genome sequence of a macrolide-resistant serotype M6 strain.</title>
        <authorList>
            <person name="Banks D.J."/>
            <person name="Porcella S.F."/>
            <person name="Barbian K.D."/>
            <person name="Beres S.B."/>
            <person name="Philips L.E."/>
            <person name="Voyich J.M."/>
            <person name="DeLeo F.R."/>
            <person name="Martin J.M."/>
            <person name="Somerville G.A."/>
            <person name="Musser J.M."/>
        </authorList>
    </citation>
    <scope>NUCLEOTIDE SEQUENCE [LARGE SCALE GENOMIC DNA]</scope>
    <source>
        <strain>ATCC BAA-946 / MGAS10394</strain>
    </source>
</reference>
<gene>
    <name evidence="1" type="primary">pheS</name>
    <name type="ordered locus">M6_Spy0604</name>
</gene>
<comment type="catalytic activity">
    <reaction evidence="1">
        <text>tRNA(Phe) + L-phenylalanine + ATP = L-phenylalanyl-tRNA(Phe) + AMP + diphosphate + H(+)</text>
        <dbReference type="Rhea" id="RHEA:19413"/>
        <dbReference type="Rhea" id="RHEA-COMP:9668"/>
        <dbReference type="Rhea" id="RHEA-COMP:9699"/>
        <dbReference type="ChEBI" id="CHEBI:15378"/>
        <dbReference type="ChEBI" id="CHEBI:30616"/>
        <dbReference type="ChEBI" id="CHEBI:33019"/>
        <dbReference type="ChEBI" id="CHEBI:58095"/>
        <dbReference type="ChEBI" id="CHEBI:78442"/>
        <dbReference type="ChEBI" id="CHEBI:78531"/>
        <dbReference type="ChEBI" id="CHEBI:456215"/>
        <dbReference type="EC" id="6.1.1.20"/>
    </reaction>
</comment>
<comment type="cofactor">
    <cofactor evidence="1">
        <name>Mg(2+)</name>
        <dbReference type="ChEBI" id="CHEBI:18420"/>
    </cofactor>
    <text evidence="1">Binds 2 magnesium ions per tetramer.</text>
</comment>
<comment type="subunit">
    <text evidence="1">Tetramer of two alpha and two beta subunits.</text>
</comment>
<comment type="subcellular location">
    <subcellularLocation>
        <location evidence="1">Cytoplasm</location>
    </subcellularLocation>
</comment>
<comment type="similarity">
    <text evidence="1">Belongs to the class-II aminoacyl-tRNA synthetase family. Phe-tRNA synthetase alpha subunit type 1 subfamily.</text>
</comment>
<comment type="sequence caution" evidence="2">
    <conflict type="erroneous initiation">
        <sequence resource="EMBL-CDS" id="AAT86739"/>
    </conflict>
</comment>
<protein>
    <recommendedName>
        <fullName evidence="1">Phenylalanine--tRNA ligase alpha subunit</fullName>
        <ecNumber evidence="1">6.1.1.20</ecNumber>
    </recommendedName>
    <alternativeName>
        <fullName evidence="1">Phenylalanyl-tRNA synthetase alpha subunit</fullName>
        <shortName evidence="1">PheRS</shortName>
    </alternativeName>
</protein>
<organism>
    <name type="scientific">Streptococcus pyogenes serotype M6 (strain ATCC BAA-946 / MGAS10394)</name>
    <dbReference type="NCBI Taxonomy" id="286636"/>
    <lineage>
        <taxon>Bacteria</taxon>
        <taxon>Bacillati</taxon>
        <taxon>Bacillota</taxon>
        <taxon>Bacilli</taxon>
        <taxon>Lactobacillales</taxon>
        <taxon>Streptococcaceae</taxon>
        <taxon>Streptococcus</taxon>
    </lineage>
</organism>